<proteinExistence type="evidence at protein level"/>
<protein>
    <recommendedName>
        <fullName>Upstream stimulatory factor 1</fullName>
    </recommendedName>
    <alternativeName>
        <fullName>Class B basic helix-loop-helix protein 11</fullName>
        <shortName>bHLHb11</shortName>
    </alternativeName>
    <alternativeName>
        <fullName>Major late transcription factor 1</fullName>
    </alternativeName>
</protein>
<gene>
    <name type="primary">USF1</name>
    <name type="synonym">BHLHB11</name>
    <name type="synonym">USF</name>
</gene>
<comment type="function">
    <text>Transcription factor that binds to a symmetrical DNA sequence (E-boxes) (5'-CACGTG-3') that is found in a variety of viral and cellular promoters.</text>
</comment>
<comment type="subunit">
    <text evidence="3">Efficient DNA binding requires dimerization with another bHLH protein. Binds DNA as a homodimer or a heterodimer (USF1/USF2). Interacts with varicella-zoster virus IE62 protein.</text>
</comment>
<comment type="interaction">
    <interactant intactId="EBI-1054489">
        <id>P22415</id>
    </interactant>
    <interactant intactId="EBI-348399">
        <id>P22607</id>
        <label>FGFR3</label>
    </interactant>
    <organismsDiffer>false</organismsDiffer>
    <experiments>3</experiments>
</comment>
<comment type="interaction">
    <interactant intactId="EBI-1054489">
        <id>P22415</id>
    </interactant>
    <interactant intactId="EBI-10198738">
        <id>Q6FG41</id>
        <label>FOS</label>
    </interactant>
    <organismsDiffer>false</organismsDiffer>
    <experiments>3</experiments>
</comment>
<comment type="interaction">
    <interactant intactId="EBI-1054489">
        <id>P22415</id>
    </interactant>
    <interactant intactId="EBI-744510">
        <id>P15407</id>
        <label>FOSL1</label>
    </interactant>
    <organismsDiffer>false</organismsDiffer>
    <experiments>7</experiments>
</comment>
<comment type="interaction">
    <interactant intactId="EBI-1054489">
        <id>P22415</id>
    </interactant>
    <interactant intactId="EBI-350145">
        <id>P01112</id>
        <label>HRAS</label>
    </interactant>
    <organismsDiffer>false</organismsDiffer>
    <experiments>3</experiments>
</comment>
<comment type="interaction">
    <interactant intactId="EBI-1054489">
        <id>P22415</id>
    </interactant>
    <interactant intactId="EBI-477430">
        <id>Q92831</id>
        <label>KAT2B</label>
    </interactant>
    <organismsDiffer>false</organismsDiffer>
    <experiments>5</experiments>
</comment>
<comment type="interaction">
    <interactant intactId="EBI-1054489">
        <id>P22415</id>
    </interactant>
    <interactant intactId="EBI-2339312">
        <id>P28838</id>
        <label>LAP3</label>
    </interactant>
    <organismsDiffer>false</organismsDiffer>
    <experiments>3</experiments>
</comment>
<comment type="interaction">
    <interactant intactId="EBI-1054489">
        <id>P22415</id>
    </interactant>
    <interactant intactId="EBI-10215880">
        <id>P57077-4</id>
        <label>MAP3K7CL</label>
    </interactant>
    <organismsDiffer>false</organismsDiffer>
    <experiments>3</experiments>
</comment>
<comment type="interaction">
    <interactant intactId="EBI-1054489">
        <id>P22415</id>
    </interactant>
    <interactant intactId="EBI-632715">
        <id>Q13573</id>
        <label>SNW1</label>
    </interactant>
    <organismsDiffer>false</organismsDiffer>
    <experiments>3</experiments>
</comment>
<comment type="interaction">
    <interactant intactId="EBI-1054489">
        <id>P22415</id>
    </interactant>
    <interactant intactId="EBI-355744">
        <id>Q12933</id>
        <label>TRAF2</label>
    </interactant>
    <organismsDiffer>false</organismsDiffer>
    <experiments>3</experiments>
</comment>
<comment type="interaction">
    <interactant intactId="EBI-1054489">
        <id>P22415</id>
    </interactant>
    <interactant intactId="EBI-741480">
        <id>Q9UMX0</id>
        <label>UBQLN1</label>
    </interactant>
    <organismsDiffer>false</organismsDiffer>
    <experiments>3</experiments>
</comment>
<comment type="interaction">
    <interactant intactId="EBI-1054489">
        <id>P22415</id>
    </interactant>
    <interactant intactId="EBI-1054489">
        <id>P22415</id>
        <label>USF1</label>
    </interactant>
    <organismsDiffer>false</organismsDiffer>
    <experiments>4</experiments>
</comment>
<comment type="subcellular location">
    <subcellularLocation>
        <location>Nucleus</location>
    </subcellularLocation>
</comment>
<comment type="alternative products">
    <event type="alternative splicing"/>
    <isoform>
        <id>P22415-1</id>
        <name>1</name>
        <sequence type="displayed"/>
    </isoform>
    <isoform>
        <id>P22415-2</id>
        <name>2</name>
        <name>usf1-bd</name>
        <sequence type="described" ref="VSP_047740"/>
    </isoform>
</comment>
<comment type="disease" evidence="4">
    <disease id="DI-02816">
        <name>Hyperlipidemia, familial combined, 1</name>
        <acronym>FCHL1</acronym>
        <description>A disorder characterized by a variable pattern of elevated levels of serum total cholesterol, triglycerides or both. It is observed in a percentage of individuals with premature coronary heart disease.</description>
        <dbReference type="MIM" id="602491"/>
    </disease>
    <text>Disease susceptibility is associated with variants affecting the gene represented in this entry.</text>
</comment>
<comment type="online information" name="Atlas of Genetics and Cytogenetics in Oncology and Haematology">
    <link uri="https://atlasgeneticsoncology.org/gene/45856/USF1"/>
</comment>
<dbReference type="EMBL" id="X55666">
    <property type="protein sequence ID" value="CAA39201.1"/>
    <property type="molecule type" value="mRNA"/>
</dbReference>
<dbReference type="EMBL" id="AB017568">
    <property type="protein sequence ID" value="BAA76541.1"/>
    <property type="molecule type" value="Genomic_DNA"/>
</dbReference>
<dbReference type="EMBL" id="AB098540">
    <property type="protein sequence ID" value="BAC78384.1"/>
    <property type="molecule type" value="mRNA"/>
</dbReference>
<dbReference type="EMBL" id="AK314876">
    <property type="protein sequence ID" value="BAG37391.1"/>
    <property type="molecule type" value="mRNA"/>
</dbReference>
<dbReference type="EMBL" id="AL832119">
    <property type="status" value="NOT_ANNOTATED_CDS"/>
    <property type="molecule type" value="mRNA"/>
</dbReference>
<dbReference type="EMBL" id="AY593992">
    <property type="protein sequence ID" value="AAS89301.1"/>
    <property type="molecule type" value="Genomic_DNA"/>
</dbReference>
<dbReference type="EMBL" id="AL591806">
    <property type="status" value="NOT_ANNOTATED_CDS"/>
    <property type="molecule type" value="Genomic_DNA"/>
</dbReference>
<dbReference type="EMBL" id="CH471121">
    <property type="protein sequence ID" value="EAW52675.1"/>
    <property type="molecule type" value="Genomic_DNA"/>
</dbReference>
<dbReference type="EMBL" id="BC035505">
    <property type="protein sequence ID" value="AAH35505.1"/>
    <property type="molecule type" value="mRNA"/>
</dbReference>
<dbReference type="CCDS" id="CCDS1214.1">
    <molecule id="P22415-1"/>
</dbReference>
<dbReference type="PIR" id="S13525">
    <property type="entry name" value="S13525"/>
</dbReference>
<dbReference type="RefSeq" id="NP_001263302.1">
    <molecule id="P22415-1"/>
    <property type="nucleotide sequence ID" value="NM_001276373.2"/>
</dbReference>
<dbReference type="RefSeq" id="NP_009053.1">
    <molecule id="P22415-1"/>
    <property type="nucleotide sequence ID" value="NM_007122.5"/>
</dbReference>
<dbReference type="RefSeq" id="NP_996888.1">
    <molecule id="P22415-2"/>
    <property type="nucleotide sequence ID" value="NM_207005.3"/>
</dbReference>
<dbReference type="RefSeq" id="XP_047285915.1">
    <molecule id="P22415-2"/>
    <property type="nucleotide sequence ID" value="XM_047429959.1"/>
</dbReference>
<dbReference type="RefSeq" id="XP_054194587.1">
    <molecule id="P22415-2"/>
    <property type="nucleotide sequence ID" value="XM_054338612.1"/>
</dbReference>
<dbReference type="PDB" id="1AN4">
    <property type="method" value="X-ray"/>
    <property type="resolution" value="2.90 A"/>
    <property type="chains" value="A/B=197-260"/>
</dbReference>
<dbReference type="PDBsum" id="1AN4"/>
<dbReference type="SASBDB" id="P22415"/>
<dbReference type="SMR" id="P22415"/>
<dbReference type="BioGRID" id="113237">
    <property type="interactions" value="82"/>
</dbReference>
<dbReference type="ComplexPortal" id="CPX-3079">
    <property type="entry name" value="USF1-USF2 upstream stimulatory factor complex"/>
</dbReference>
<dbReference type="ComplexPortal" id="CPX-3082">
    <property type="entry name" value="USF1 upstream stimulatory factor complex"/>
</dbReference>
<dbReference type="CORUM" id="P22415"/>
<dbReference type="DIP" id="DIP-654N"/>
<dbReference type="FunCoup" id="P22415">
    <property type="interactions" value="3648"/>
</dbReference>
<dbReference type="IntAct" id="P22415">
    <property type="interactions" value="47"/>
</dbReference>
<dbReference type="MINT" id="P22415"/>
<dbReference type="STRING" id="9606.ENSP00000357000"/>
<dbReference type="GlyGen" id="P22415">
    <property type="glycosylation" value="1 site, 1 O-linked glycan (1 site)"/>
</dbReference>
<dbReference type="iPTMnet" id="P22415"/>
<dbReference type="PhosphoSitePlus" id="P22415"/>
<dbReference type="BioMuta" id="USF1"/>
<dbReference type="DMDM" id="137170"/>
<dbReference type="jPOST" id="P22415"/>
<dbReference type="MassIVE" id="P22415"/>
<dbReference type="PaxDb" id="9606-ENSP00000357000"/>
<dbReference type="PeptideAtlas" id="P22415"/>
<dbReference type="ProteomicsDB" id="53989">
    <molecule id="P22415-1"/>
</dbReference>
<dbReference type="ProteomicsDB" id="69358"/>
<dbReference type="Pumba" id="P22415"/>
<dbReference type="Antibodypedia" id="3773">
    <property type="antibodies" value="372 antibodies from 36 providers"/>
</dbReference>
<dbReference type="DNASU" id="7391"/>
<dbReference type="Ensembl" id="ENST00000368020.5">
    <molecule id="P22415-1"/>
    <property type="protein sequence ID" value="ENSP00000356999.1"/>
    <property type="gene ID" value="ENSG00000158773.14"/>
</dbReference>
<dbReference type="Ensembl" id="ENST00000368021.7">
    <molecule id="P22415-1"/>
    <property type="protein sequence ID" value="ENSP00000357000.3"/>
    <property type="gene ID" value="ENSG00000158773.14"/>
</dbReference>
<dbReference type="GeneID" id="7391"/>
<dbReference type="KEGG" id="hsa:7391"/>
<dbReference type="MANE-Select" id="ENST00000368021.7">
    <property type="protein sequence ID" value="ENSP00000357000.3"/>
    <property type="RefSeq nucleotide sequence ID" value="NM_007122.5"/>
    <property type="RefSeq protein sequence ID" value="NP_009053.1"/>
</dbReference>
<dbReference type="UCSC" id="uc001fxi.5">
    <molecule id="P22415-1"/>
    <property type="organism name" value="human"/>
</dbReference>
<dbReference type="AGR" id="HGNC:12593"/>
<dbReference type="CTD" id="7391"/>
<dbReference type="DisGeNET" id="7391"/>
<dbReference type="GeneCards" id="USF1"/>
<dbReference type="HGNC" id="HGNC:12593">
    <property type="gene designation" value="USF1"/>
</dbReference>
<dbReference type="HPA" id="ENSG00000158773">
    <property type="expression patterns" value="Low tissue specificity"/>
</dbReference>
<dbReference type="MalaCards" id="USF1"/>
<dbReference type="MIM" id="191523">
    <property type="type" value="gene"/>
</dbReference>
<dbReference type="MIM" id="602491">
    <property type="type" value="phenotype"/>
</dbReference>
<dbReference type="neXtProt" id="NX_P22415"/>
<dbReference type="OpenTargets" id="ENSG00000158773"/>
<dbReference type="PharmGKB" id="PA37223"/>
<dbReference type="VEuPathDB" id="HostDB:ENSG00000158773"/>
<dbReference type="eggNOG" id="KOG1318">
    <property type="taxonomic scope" value="Eukaryota"/>
</dbReference>
<dbReference type="GeneTree" id="ENSGT00940000157083"/>
<dbReference type="InParanoid" id="P22415"/>
<dbReference type="OMA" id="GAQVMYR"/>
<dbReference type="OrthoDB" id="690068at2759"/>
<dbReference type="PAN-GO" id="P22415">
    <property type="GO annotations" value="3 GO annotations based on evolutionary models"/>
</dbReference>
<dbReference type="PhylomeDB" id="P22415"/>
<dbReference type="TreeFam" id="TF323338"/>
<dbReference type="PathwayCommons" id="P22415"/>
<dbReference type="Reactome" id="R-HSA-9018519">
    <property type="pathway name" value="Estrogen-dependent gene expression"/>
</dbReference>
<dbReference type="Reactome" id="R-HSA-9824585">
    <property type="pathway name" value="Regulation of MITF-M-dependent genes involved in pigmentation"/>
</dbReference>
<dbReference type="SignaLink" id="P22415"/>
<dbReference type="SIGNOR" id="P22415"/>
<dbReference type="BioGRID-ORCS" id="7391">
    <property type="hits" value="13 hits in 1179 CRISPR screens"/>
</dbReference>
<dbReference type="ChiTaRS" id="USF1">
    <property type="organism name" value="human"/>
</dbReference>
<dbReference type="EvolutionaryTrace" id="P22415"/>
<dbReference type="GeneWiki" id="USF1"/>
<dbReference type="GenomeRNAi" id="7391"/>
<dbReference type="Pharos" id="P22415">
    <property type="development level" value="Tbio"/>
</dbReference>
<dbReference type="PRO" id="PR:P22415"/>
<dbReference type="Proteomes" id="UP000005640">
    <property type="component" value="Chromosome 1"/>
</dbReference>
<dbReference type="RNAct" id="P22415">
    <property type="molecule type" value="protein"/>
</dbReference>
<dbReference type="Bgee" id="ENSG00000158773">
    <property type="expression patterns" value="Expressed in granulocyte and 94 other cell types or tissues"/>
</dbReference>
<dbReference type="ExpressionAtlas" id="P22415">
    <property type="expression patterns" value="baseline and differential"/>
</dbReference>
<dbReference type="GO" id="GO:0000785">
    <property type="term" value="C:chromatin"/>
    <property type="evidence" value="ECO:0000314"/>
    <property type="project" value="ParkinsonsUK-UCL"/>
</dbReference>
<dbReference type="GO" id="GO:0005794">
    <property type="term" value="C:Golgi apparatus"/>
    <property type="evidence" value="ECO:0000314"/>
    <property type="project" value="HPA"/>
</dbReference>
<dbReference type="GO" id="GO:0005654">
    <property type="term" value="C:nucleoplasm"/>
    <property type="evidence" value="ECO:0000314"/>
    <property type="project" value="HPA"/>
</dbReference>
<dbReference type="GO" id="GO:0005634">
    <property type="term" value="C:nucleus"/>
    <property type="evidence" value="ECO:0000314"/>
    <property type="project" value="LIFEdb"/>
</dbReference>
<dbReference type="GO" id="GO:0005667">
    <property type="term" value="C:transcription regulator complex"/>
    <property type="evidence" value="ECO:0000314"/>
    <property type="project" value="BHF-UCL"/>
</dbReference>
<dbReference type="GO" id="GO:0043425">
    <property type="term" value="F:bHLH transcription factor binding"/>
    <property type="evidence" value="ECO:0000353"/>
    <property type="project" value="BHF-UCL"/>
</dbReference>
<dbReference type="GO" id="GO:0001228">
    <property type="term" value="F:DNA-binding transcription activator activity, RNA polymerase II-specific"/>
    <property type="evidence" value="ECO:0000315"/>
    <property type="project" value="BHF-UCL"/>
</dbReference>
<dbReference type="GO" id="GO:0000981">
    <property type="term" value="F:DNA-binding transcription factor activity, RNA polymerase II-specific"/>
    <property type="evidence" value="ECO:0000314"/>
    <property type="project" value="BHF-UCL"/>
</dbReference>
<dbReference type="GO" id="GO:0019899">
    <property type="term" value="F:enzyme binding"/>
    <property type="evidence" value="ECO:0000353"/>
    <property type="project" value="BHF-UCL"/>
</dbReference>
<dbReference type="GO" id="GO:0042826">
    <property type="term" value="F:histone deacetylase binding"/>
    <property type="evidence" value="ECO:0000353"/>
    <property type="project" value="BHF-UCL"/>
</dbReference>
<dbReference type="GO" id="GO:0042802">
    <property type="term" value="F:identical protein binding"/>
    <property type="evidence" value="ECO:0000353"/>
    <property type="project" value="IntAct"/>
</dbReference>
<dbReference type="GO" id="GO:0046982">
    <property type="term" value="F:protein heterodimerization activity"/>
    <property type="evidence" value="ECO:0000353"/>
    <property type="project" value="BHF-UCL"/>
</dbReference>
<dbReference type="GO" id="GO:0042803">
    <property type="term" value="F:protein homodimerization activity"/>
    <property type="evidence" value="ECO:0000353"/>
    <property type="project" value="BHF-UCL"/>
</dbReference>
<dbReference type="GO" id="GO:0019901">
    <property type="term" value="F:protein kinase binding"/>
    <property type="evidence" value="ECO:0000353"/>
    <property type="project" value="BHF-UCL"/>
</dbReference>
<dbReference type="GO" id="GO:0044877">
    <property type="term" value="F:protein-containing complex binding"/>
    <property type="evidence" value="ECO:0000353"/>
    <property type="project" value="ParkinsonsUK-UCL"/>
</dbReference>
<dbReference type="GO" id="GO:0000978">
    <property type="term" value="F:RNA polymerase II cis-regulatory region sequence-specific DNA binding"/>
    <property type="evidence" value="ECO:0000318"/>
    <property type="project" value="GO_Central"/>
</dbReference>
<dbReference type="GO" id="GO:0043565">
    <property type="term" value="F:sequence-specific DNA binding"/>
    <property type="evidence" value="ECO:0000314"/>
    <property type="project" value="BHF-UCL"/>
</dbReference>
<dbReference type="GO" id="GO:1990837">
    <property type="term" value="F:sequence-specific double-stranded DNA binding"/>
    <property type="evidence" value="ECO:0000314"/>
    <property type="project" value="ARUK-UCL"/>
</dbReference>
<dbReference type="GO" id="GO:0045990">
    <property type="term" value="P:carbon catabolite regulation of transcription"/>
    <property type="evidence" value="ECO:0000304"/>
    <property type="project" value="BHF-UCL"/>
</dbReference>
<dbReference type="GO" id="GO:0071333">
    <property type="term" value="P:cellular response to glucose stimulus"/>
    <property type="evidence" value="ECO:0000315"/>
    <property type="project" value="BHF-UCL"/>
</dbReference>
<dbReference type="GO" id="GO:0032869">
    <property type="term" value="P:cellular response to insulin stimulus"/>
    <property type="evidence" value="ECO:0000314"/>
    <property type="project" value="BHF-UCL"/>
</dbReference>
<dbReference type="GO" id="GO:0042593">
    <property type="term" value="P:glucose homeostasis"/>
    <property type="evidence" value="ECO:0000304"/>
    <property type="project" value="BHF-UCL"/>
</dbReference>
<dbReference type="GO" id="GO:0010255">
    <property type="term" value="P:glucose mediated signaling pathway"/>
    <property type="evidence" value="ECO:0000315"/>
    <property type="project" value="BHF-UCL"/>
</dbReference>
<dbReference type="GO" id="GO:0006006">
    <property type="term" value="P:glucose metabolic process"/>
    <property type="evidence" value="ECO:0007669"/>
    <property type="project" value="Ensembl"/>
</dbReference>
<dbReference type="GO" id="GO:0019086">
    <property type="term" value="P:late viral transcription"/>
    <property type="evidence" value="ECO:0000314"/>
    <property type="project" value="BHF-UCL"/>
</dbReference>
<dbReference type="GO" id="GO:0055088">
    <property type="term" value="P:lipid homeostasis"/>
    <property type="evidence" value="ECO:0000250"/>
    <property type="project" value="BHF-UCL"/>
</dbReference>
<dbReference type="GO" id="GO:0051918">
    <property type="term" value="P:negative regulation of fibrinolysis"/>
    <property type="evidence" value="ECO:0000305"/>
    <property type="project" value="BHF-UCL"/>
</dbReference>
<dbReference type="GO" id="GO:0045944">
    <property type="term" value="P:positive regulation of transcription by RNA polymerase II"/>
    <property type="evidence" value="ECO:0000315"/>
    <property type="project" value="BHF-UCL"/>
</dbReference>
<dbReference type="GO" id="GO:0000432">
    <property type="term" value="P:positive regulation of transcription from RNA polymerase II promoter by glucose"/>
    <property type="evidence" value="ECO:0000250"/>
    <property type="project" value="BHF-UCL"/>
</dbReference>
<dbReference type="GO" id="GO:0006357">
    <property type="term" value="P:regulation of transcription by RNA polymerase II"/>
    <property type="evidence" value="ECO:0000314"/>
    <property type="project" value="BHF-UCL"/>
</dbReference>
<dbReference type="GO" id="GO:0000430">
    <property type="term" value="P:regulation of transcription from RNA polymerase II promoter by glucose"/>
    <property type="evidence" value="ECO:0000305"/>
    <property type="project" value="BHF-UCL"/>
</dbReference>
<dbReference type="GO" id="GO:0001666">
    <property type="term" value="P:response to hypoxia"/>
    <property type="evidence" value="ECO:0000315"/>
    <property type="project" value="BHF-UCL"/>
</dbReference>
<dbReference type="GO" id="GO:0009411">
    <property type="term" value="P:response to UV"/>
    <property type="evidence" value="ECO:0000250"/>
    <property type="project" value="BHF-UCL"/>
</dbReference>
<dbReference type="CDD" id="cd18924">
    <property type="entry name" value="bHLHzip_USF1"/>
    <property type="match status" value="1"/>
</dbReference>
<dbReference type="FunFam" id="4.10.280.10:FF:000067">
    <property type="entry name" value="upstream stimulatory factor 1 isoform X1"/>
    <property type="match status" value="1"/>
</dbReference>
<dbReference type="Gene3D" id="4.10.280.10">
    <property type="entry name" value="Helix-loop-helix DNA-binding domain"/>
    <property type="match status" value="1"/>
</dbReference>
<dbReference type="IDEAL" id="IID00121"/>
<dbReference type="InterPro" id="IPR011598">
    <property type="entry name" value="bHLH_dom"/>
</dbReference>
<dbReference type="InterPro" id="IPR036638">
    <property type="entry name" value="HLH_DNA-bd_sf"/>
</dbReference>
<dbReference type="InterPro" id="IPR051732">
    <property type="entry name" value="USF"/>
</dbReference>
<dbReference type="PANTHER" id="PTHR46117">
    <property type="entry name" value="FI24210P1"/>
    <property type="match status" value="1"/>
</dbReference>
<dbReference type="PANTHER" id="PTHR46117:SF1">
    <property type="entry name" value="UPSTREAM STIMULATORY FACTOR 1"/>
    <property type="match status" value="1"/>
</dbReference>
<dbReference type="Pfam" id="PF00010">
    <property type="entry name" value="HLH"/>
    <property type="match status" value="1"/>
</dbReference>
<dbReference type="SMART" id="SM00353">
    <property type="entry name" value="HLH"/>
    <property type="match status" value="1"/>
</dbReference>
<dbReference type="SUPFAM" id="SSF47459">
    <property type="entry name" value="HLH, helix-loop-helix DNA-binding domain"/>
    <property type="match status" value="1"/>
</dbReference>
<dbReference type="PROSITE" id="PS50888">
    <property type="entry name" value="BHLH"/>
    <property type="match status" value="1"/>
</dbReference>
<feature type="chain" id="PRO_0000127496" description="Upstream stimulatory factor 1">
    <location>
        <begin position="1"/>
        <end position="310"/>
    </location>
</feature>
<feature type="domain" description="bHLH" evidence="1">
    <location>
        <begin position="199"/>
        <end position="254"/>
    </location>
</feature>
<feature type="region of interest" description="Disordered" evidence="2">
    <location>
        <begin position="1"/>
        <end position="26"/>
    </location>
</feature>
<feature type="region of interest" description="Disordered" evidence="2">
    <location>
        <begin position="171"/>
        <end position="209"/>
    </location>
</feature>
<feature type="region of interest" description="Leucine-zipper">
    <location>
        <begin position="271"/>
        <end position="292"/>
    </location>
</feature>
<feature type="compositionally biased region" description="Polar residues" evidence="2">
    <location>
        <begin position="1"/>
        <end position="17"/>
    </location>
</feature>
<feature type="compositionally biased region" description="Basic and acidic residues" evidence="2">
    <location>
        <begin position="190"/>
        <end position="209"/>
    </location>
</feature>
<feature type="cross-link" description="Glycyl lysine isopeptide (Lys-Gly) (interchain with G-Cter in SUMO2)" evidence="6 7">
    <location>
        <position position="306"/>
    </location>
</feature>
<feature type="splice variant" id="VSP_047740" description="In isoform 2." evidence="5">
    <location>
        <begin position="1"/>
        <end position="59"/>
    </location>
</feature>
<feature type="helix" evidence="8">
    <location>
        <begin position="205"/>
        <end position="225"/>
    </location>
</feature>
<feature type="strand" evidence="8">
    <location>
        <begin position="233"/>
        <end position="236"/>
    </location>
</feature>
<feature type="turn" evidence="8">
    <location>
        <begin position="240"/>
        <end position="247"/>
    </location>
</feature>
<feature type="helix" evidence="8">
    <location>
        <begin position="248"/>
        <end position="255"/>
    </location>
</feature>
<feature type="turn" evidence="8">
    <location>
        <begin position="256"/>
        <end position="258"/>
    </location>
</feature>
<keyword id="KW-0002">3D-structure</keyword>
<keyword id="KW-0025">Alternative splicing</keyword>
<keyword id="KW-0903">Direct protein sequencing</keyword>
<keyword id="KW-0238">DNA-binding</keyword>
<keyword id="KW-1017">Isopeptide bond</keyword>
<keyword id="KW-0539">Nucleus</keyword>
<keyword id="KW-1267">Proteomics identification</keyword>
<keyword id="KW-1185">Reference proteome</keyword>
<keyword id="KW-0804">Transcription</keyword>
<keyword id="KW-0805">Transcription regulation</keyword>
<keyword id="KW-0832">Ubl conjugation</keyword>
<sequence>MKGQQKTAETEEGTVQIQEGAVATGEDPTSVAIASIQSAATFPDPNVKYVFRTENGGQVMYRVIQVSEGQLDGQTEGTGAISGYPATQSMTQAVIQGAFTSDDAVDTEGTAAETHYTYFPSTAVGDGAGGTTSGSTAAVVTTQGSEALLGQATPPGTGQFFVMMSPQEVLQGGSQRSIAPRTHPYSPKSEAPRTTRDEKRRAQHNEVERRRRDKINNWIVQLSKIIPDCSMESTKSGQSKGGILSKACDYIQELRQSNHRLSEELQGLDQLQLDNDVLRQQVEDLKNKNLLLRAQLRHHGLEVVIKNDSN</sequence>
<evidence type="ECO:0000255" key="1">
    <source>
        <dbReference type="PROSITE-ProRule" id="PRU00981"/>
    </source>
</evidence>
<evidence type="ECO:0000256" key="2">
    <source>
        <dbReference type="SAM" id="MobiDB-lite"/>
    </source>
</evidence>
<evidence type="ECO:0000269" key="3">
    <source>
    </source>
</evidence>
<evidence type="ECO:0000269" key="4">
    <source>
    </source>
</evidence>
<evidence type="ECO:0000303" key="5">
    <source ref="3"/>
</evidence>
<evidence type="ECO:0007744" key="6">
    <source>
    </source>
</evidence>
<evidence type="ECO:0007744" key="7">
    <source>
    </source>
</evidence>
<evidence type="ECO:0007829" key="8">
    <source>
        <dbReference type="PDB" id="1AN4"/>
    </source>
</evidence>
<organism>
    <name type="scientific">Homo sapiens</name>
    <name type="common">Human</name>
    <dbReference type="NCBI Taxonomy" id="9606"/>
    <lineage>
        <taxon>Eukaryota</taxon>
        <taxon>Metazoa</taxon>
        <taxon>Chordata</taxon>
        <taxon>Craniata</taxon>
        <taxon>Vertebrata</taxon>
        <taxon>Euteleostomi</taxon>
        <taxon>Mammalia</taxon>
        <taxon>Eutheria</taxon>
        <taxon>Euarchontoglires</taxon>
        <taxon>Primates</taxon>
        <taxon>Haplorrhini</taxon>
        <taxon>Catarrhini</taxon>
        <taxon>Hominidae</taxon>
        <taxon>Homo</taxon>
    </lineage>
</organism>
<name>USF1_HUMAN</name>
<accession>P22415</accession>
<accession>B2RBZ4</accession>
<accession>Q5SY46</accession>
<accession>Q7Z5Y1</accession>
<reference key="1">
    <citation type="journal article" date="1990" name="Genes Dev.">
        <title>The adenovirus major late transcription factor USF is a member of the helix-loop-helix group of regulatory proteins and binds to DNA as a dimer.</title>
        <authorList>
            <person name="Gregor P.D."/>
            <person name="Sawadogo M."/>
            <person name="Roeder R.G."/>
        </authorList>
    </citation>
    <scope>NUCLEOTIDE SEQUENCE [MRNA] (ISOFORM 1)</scope>
    <scope>PROTEIN SEQUENCE OF 1-25</scope>
</reference>
<reference key="2">
    <citation type="submission" date="1998-09" db="EMBL/GenBank/DDBJ databases">
        <title>Human USF1 genomic sequence.</title>
        <authorList>
            <person name="Fukamizu A."/>
        </authorList>
    </citation>
    <scope>NUCLEOTIDE SEQUENCE [GENOMIC DNA]</scope>
</reference>
<reference key="3">
    <citation type="submission" date="2002-12" db="EMBL/GenBank/DDBJ databases">
        <title>Cloning and characterization of a novel splicing isoform of USF1.</title>
        <authorList>
            <person name="Saito T."/>
            <person name="Oishi T."/>
            <person name="Yanai K."/>
            <person name="Shimamoto Y."/>
            <person name="Fukamizu A."/>
        </authorList>
    </citation>
    <scope>NUCLEOTIDE SEQUENCE [MRNA] (ISOFORM 2)</scope>
    <scope>ALTERNATIVE SPLICING</scope>
</reference>
<reference key="4">
    <citation type="journal article" date="2004" name="Nat. Genet.">
        <title>Complete sequencing and characterization of 21,243 full-length human cDNAs.</title>
        <authorList>
            <person name="Ota T."/>
            <person name="Suzuki Y."/>
            <person name="Nishikawa T."/>
            <person name="Otsuki T."/>
            <person name="Sugiyama T."/>
            <person name="Irie R."/>
            <person name="Wakamatsu A."/>
            <person name="Hayashi K."/>
            <person name="Sato H."/>
            <person name="Nagai K."/>
            <person name="Kimura K."/>
            <person name="Makita H."/>
            <person name="Sekine M."/>
            <person name="Obayashi M."/>
            <person name="Nishi T."/>
            <person name="Shibahara T."/>
            <person name="Tanaka T."/>
            <person name="Ishii S."/>
            <person name="Yamamoto J."/>
            <person name="Saito K."/>
            <person name="Kawai Y."/>
            <person name="Isono Y."/>
            <person name="Nakamura Y."/>
            <person name="Nagahari K."/>
            <person name="Murakami K."/>
            <person name="Yasuda T."/>
            <person name="Iwayanagi T."/>
            <person name="Wagatsuma M."/>
            <person name="Shiratori A."/>
            <person name="Sudo H."/>
            <person name="Hosoiri T."/>
            <person name="Kaku Y."/>
            <person name="Kodaira H."/>
            <person name="Kondo H."/>
            <person name="Sugawara M."/>
            <person name="Takahashi M."/>
            <person name="Kanda K."/>
            <person name="Yokoi T."/>
            <person name="Furuya T."/>
            <person name="Kikkawa E."/>
            <person name="Omura Y."/>
            <person name="Abe K."/>
            <person name="Kamihara K."/>
            <person name="Katsuta N."/>
            <person name="Sato K."/>
            <person name="Tanikawa M."/>
            <person name="Yamazaki M."/>
            <person name="Ninomiya K."/>
            <person name="Ishibashi T."/>
            <person name="Yamashita H."/>
            <person name="Murakawa K."/>
            <person name="Fujimori K."/>
            <person name="Tanai H."/>
            <person name="Kimata M."/>
            <person name="Watanabe M."/>
            <person name="Hiraoka S."/>
            <person name="Chiba Y."/>
            <person name="Ishida S."/>
            <person name="Ono Y."/>
            <person name="Takiguchi S."/>
            <person name="Watanabe S."/>
            <person name="Yosida M."/>
            <person name="Hotuta T."/>
            <person name="Kusano J."/>
            <person name="Kanehori K."/>
            <person name="Takahashi-Fujii A."/>
            <person name="Hara H."/>
            <person name="Tanase T.-O."/>
            <person name="Nomura Y."/>
            <person name="Togiya S."/>
            <person name="Komai F."/>
            <person name="Hara R."/>
            <person name="Takeuchi K."/>
            <person name="Arita M."/>
            <person name="Imose N."/>
            <person name="Musashino K."/>
            <person name="Yuuki H."/>
            <person name="Oshima A."/>
            <person name="Sasaki N."/>
            <person name="Aotsuka S."/>
            <person name="Yoshikawa Y."/>
            <person name="Matsunawa H."/>
            <person name="Ichihara T."/>
            <person name="Shiohata N."/>
            <person name="Sano S."/>
            <person name="Moriya S."/>
            <person name="Momiyama H."/>
            <person name="Satoh N."/>
            <person name="Takami S."/>
            <person name="Terashima Y."/>
            <person name="Suzuki O."/>
            <person name="Nakagawa S."/>
            <person name="Senoh A."/>
            <person name="Mizoguchi H."/>
            <person name="Goto Y."/>
            <person name="Shimizu F."/>
            <person name="Wakebe H."/>
            <person name="Hishigaki H."/>
            <person name="Watanabe T."/>
            <person name="Sugiyama A."/>
            <person name="Takemoto M."/>
            <person name="Kawakami B."/>
            <person name="Yamazaki M."/>
            <person name="Watanabe K."/>
            <person name="Kumagai A."/>
            <person name="Itakura S."/>
            <person name="Fukuzumi Y."/>
            <person name="Fujimori Y."/>
            <person name="Komiyama M."/>
            <person name="Tashiro H."/>
            <person name="Tanigami A."/>
            <person name="Fujiwara T."/>
            <person name="Ono T."/>
            <person name="Yamada K."/>
            <person name="Fujii Y."/>
            <person name="Ozaki K."/>
            <person name="Hirao M."/>
            <person name="Ohmori Y."/>
            <person name="Kawabata A."/>
            <person name="Hikiji T."/>
            <person name="Kobatake N."/>
            <person name="Inagaki H."/>
            <person name="Ikema Y."/>
            <person name="Okamoto S."/>
            <person name="Okitani R."/>
            <person name="Kawakami T."/>
            <person name="Noguchi S."/>
            <person name="Itoh T."/>
            <person name="Shigeta K."/>
            <person name="Senba T."/>
            <person name="Matsumura K."/>
            <person name="Nakajima Y."/>
            <person name="Mizuno T."/>
            <person name="Morinaga M."/>
            <person name="Sasaki M."/>
            <person name="Togashi T."/>
            <person name="Oyama M."/>
            <person name="Hata H."/>
            <person name="Watanabe M."/>
            <person name="Komatsu T."/>
            <person name="Mizushima-Sugano J."/>
            <person name="Satoh T."/>
            <person name="Shirai Y."/>
            <person name="Takahashi Y."/>
            <person name="Nakagawa K."/>
            <person name="Okumura K."/>
            <person name="Nagase T."/>
            <person name="Nomura N."/>
            <person name="Kikuchi H."/>
            <person name="Masuho Y."/>
            <person name="Yamashita R."/>
            <person name="Nakai K."/>
            <person name="Yada T."/>
            <person name="Nakamura Y."/>
            <person name="Ohara O."/>
            <person name="Isogai T."/>
            <person name="Sugano S."/>
        </authorList>
    </citation>
    <scope>NUCLEOTIDE SEQUENCE [LARGE SCALE MRNA] (ISOFORM 1)</scope>
    <source>
        <tissue>Testis</tissue>
    </source>
</reference>
<reference key="5">
    <citation type="journal article" date="2007" name="BMC Genomics">
        <title>The full-ORF clone resource of the German cDNA consortium.</title>
        <authorList>
            <person name="Bechtel S."/>
            <person name="Rosenfelder H."/>
            <person name="Duda A."/>
            <person name="Schmidt C.P."/>
            <person name="Ernst U."/>
            <person name="Wellenreuther R."/>
            <person name="Mehrle A."/>
            <person name="Schuster C."/>
            <person name="Bahr A."/>
            <person name="Bloecker H."/>
            <person name="Heubner D."/>
            <person name="Hoerlein A."/>
            <person name="Michel G."/>
            <person name="Wedler H."/>
            <person name="Koehrer K."/>
            <person name="Ottenwaelder B."/>
            <person name="Poustka A."/>
            <person name="Wiemann S."/>
            <person name="Schupp I."/>
        </authorList>
    </citation>
    <scope>NUCLEOTIDE SEQUENCE [LARGE SCALE MRNA] (ISOFORM 1)</scope>
    <source>
        <tissue>Fetal kidney</tissue>
    </source>
</reference>
<reference key="6">
    <citation type="submission" date="2004-04" db="EMBL/GenBank/DDBJ databases">
        <authorList>
            <consortium name="SeattleSNPs variation discovery resource"/>
        </authorList>
    </citation>
    <scope>NUCLEOTIDE SEQUENCE [GENOMIC DNA]</scope>
</reference>
<reference key="7">
    <citation type="journal article" date="2006" name="Nature">
        <title>The DNA sequence and biological annotation of human chromosome 1.</title>
        <authorList>
            <person name="Gregory S.G."/>
            <person name="Barlow K.F."/>
            <person name="McLay K.E."/>
            <person name="Kaul R."/>
            <person name="Swarbreck D."/>
            <person name="Dunham A."/>
            <person name="Scott C.E."/>
            <person name="Howe K.L."/>
            <person name="Woodfine K."/>
            <person name="Spencer C.C.A."/>
            <person name="Jones M.C."/>
            <person name="Gillson C."/>
            <person name="Searle S."/>
            <person name="Zhou Y."/>
            <person name="Kokocinski F."/>
            <person name="McDonald L."/>
            <person name="Evans R."/>
            <person name="Phillips K."/>
            <person name="Atkinson A."/>
            <person name="Cooper R."/>
            <person name="Jones C."/>
            <person name="Hall R.E."/>
            <person name="Andrews T.D."/>
            <person name="Lloyd C."/>
            <person name="Ainscough R."/>
            <person name="Almeida J.P."/>
            <person name="Ambrose K.D."/>
            <person name="Anderson F."/>
            <person name="Andrew R.W."/>
            <person name="Ashwell R.I.S."/>
            <person name="Aubin K."/>
            <person name="Babbage A.K."/>
            <person name="Bagguley C.L."/>
            <person name="Bailey J."/>
            <person name="Beasley H."/>
            <person name="Bethel G."/>
            <person name="Bird C.P."/>
            <person name="Bray-Allen S."/>
            <person name="Brown J.Y."/>
            <person name="Brown A.J."/>
            <person name="Buckley D."/>
            <person name="Burton J."/>
            <person name="Bye J."/>
            <person name="Carder C."/>
            <person name="Chapman J.C."/>
            <person name="Clark S.Y."/>
            <person name="Clarke G."/>
            <person name="Clee C."/>
            <person name="Cobley V."/>
            <person name="Collier R.E."/>
            <person name="Corby N."/>
            <person name="Coville G.J."/>
            <person name="Davies J."/>
            <person name="Deadman R."/>
            <person name="Dunn M."/>
            <person name="Earthrowl M."/>
            <person name="Ellington A.G."/>
            <person name="Errington H."/>
            <person name="Frankish A."/>
            <person name="Frankland J."/>
            <person name="French L."/>
            <person name="Garner P."/>
            <person name="Garnett J."/>
            <person name="Gay L."/>
            <person name="Ghori M.R.J."/>
            <person name="Gibson R."/>
            <person name="Gilby L.M."/>
            <person name="Gillett W."/>
            <person name="Glithero R.J."/>
            <person name="Grafham D.V."/>
            <person name="Griffiths C."/>
            <person name="Griffiths-Jones S."/>
            <person name="Grocock R."/>
            <person name="Hammond S."/>
            <person name="Harrison E.S.I."/>
            <person name="Hart E."/>
            <person name="Haugen E."/>
            <person name="Heath P.D."/>
            <person name="Holmes S."/>
            <person name="Holt K."/>
            <person name="Howden P.J."/>
            <person name="Hunt A.R."/>
            <person name="Hunt S.E."/>
            <person name="Hunter G."/>
            <person name="Isherwood J."/>
            <person name="James R."/>
            <person name="Johnson C."/>
            <person name="Johnson D."/>
            <person name="Joy A."/>
            <person name="Kay M."/>
            <person name="Kershaw J.K."/>
            <person name="Kibukawa M."/>
            <person name="Kimberley A.M."/>
            <person name="King A."/>
            <person name="Knights A.J."/>
            <person name="Lad H."/>
            <person name="Laird G."/>
            <person name="Lawlor S."/>
            <person name="Leongamornlert D.A."/>
            <person name="Lloyd D.M."/>
            <person name="Loveland J."/>
            <person name="Lovell J."/>
            <person name="Lush M.J."/>
            <person name="Lyne R."/>
            <person name="Martin S."/>
            <person name="Mashreghi-Mohammadi M."/>
            <person name="Matthews L."/>
            <person name="Matthews N.S.W."/>
            <person name="McLaren S."/>
            <person name="Milne S."/>
            <person name="Mistry S."/>
            <person name="Moore M.J.F."/>
            <person name="Nickerson T."/>
            <person name="O'Dell C.N."/>
            <person name="Oliver K."/>
            <person name="Palmeiri A."/>
            <person name="Palmer S.A."/>
            <person name="Parker A."/>
            <person name="Patel D."/>
            <person name="Pearce A.V."/>
            <person name="Peck A.I."/>
            <person name="Pelan S."/>
            <person name="Phelps K."/>
            <person name="Phillimore B.J."/>
            <person name="Plumb R."/>
            <person name="Rajan J."/>
            <person name="Raymond C."/>
            <person name="Rouse G."/>
            <person name="Saenphimmachak C."/>
            <person name="Sehra H.K."/>
            <person name="Sheridan E."/>
            <person name="Shownkeen R."/>
            <person name="Sims S."/>
            <person name="Skuce C.D."/>
            <person name="Smith M."/>
            <person name="Steward C."/>
            <person name="Subramanian S."/>
            <person name="Sycamore N."/>
            <person name="Tracey A."/>
            <person name="Tromans A."/>
            <person name="Van Helmond Z."/>
            <person name="Wall M."/>
            <person name="Wallis J.M."/>
            <person name="White S."/>
            <person name="Whitehead S.L."/>
            <person name="Wilkinson J.E."/>
            <person name="Willey D.L."/>
            <person name="Williams H."/>
            <person name="Wilming L."/>
            <person name="Wray P.W."/>
            <person name="Wu Z."/>
            <person name="Coulson A."/>
            <person name="Vaudin M."/>
            <person name="Sulston J.E."/>
            <person name="Durbin R.M."/>
            <person name="Hubbard T."/>
            <person name="Wooster R."/>
            <person name="Dunham I."/>
            <person name="Carter N.P."/>
            <person name="McVean G."/>
            <person name="Ross M.T."/>
            <person name="Harrow J."/>
            <person name="Olson M.V."/>
            <person name="Beck S."/>
            <person name="Rogers J."/>
            <person name="Bentley D.R."/>
        </authorList>
    </citation>
    <scope>NUCLEOTIDE SEQUENCE [LARGE SCALE GENOMIC DNA]</scope>
</reference>
<reference key="8">
    <citation type="submission" date="2005-09" db="EMBL/GenBank/DDBJ databases">
        <authorList>
            <person name="Mural R.J."/>
            <person name="Istrail S."/>
            <person name="Sutton G.G."/>
            <person name="Florea L."/>
            <person name="Halpern A.L."/>
            <person name="Mobarry C.M."/>
            <person name="Lippert R."/>
            <person name="Walenz B."/>
            <person name="Shatkay H."/>
            <person name="Dew I."/>
            <person name="Miller J.R."/>
            <person name="Flanigan M.J."/>
            <person name="Edwards N.J."/>
            <person name="Bolanos R."/>
            <person name="Fasulo D."/>
            <person name="Halldorsson B.V."/>
            <person name="Hannenhalli S."/>
            <person name="Turner R."/>
            <person name="Yooseph S."/>
            <person name="Lu F."/>
            <person name="Nusskern D.R."/>
            <person name="Shue B.C."/>
            <person name="Zheng X.H."/>
            <person name="Zhong F."/>
            <person name="Delcher A.L."/>
            <person name="Huson D.H."/>
            <person name="Kravitz S.A."/>
            <person name="Mouchard L."/>
            <person name="Reinert K."/>
            <person name="Remington K.A."/>
            <person name="Clark A.G."/>
            <person name="Waterman M.S."/>
            <person name="Eichler E.E."/>
            <person name="Adams M.D."/>
            <person name="Hunkapiller M.W."/>
            <person name="Myers E.W."/>
            <person name="Venter J.C."/>
        </authorList>
    </citation>
    <scope>NUCLEOTIDE SEQUENCE [LARGE SCALE GENOMIC DNA]</scope>
</reference>
<reference key="9">
    <citation type="journal article" date="2004" name="Genome Res.">
        <title>The status, quality, and expansion of the NIH full-length cDNA project: the Mammalian Gene Collection (MGC).</title>
        <authorList>
            <consortium name="The MGC Project Team"/>
        </authorList>
    </citation>
    <scope>NUCLEOTIDE SEQUENCE [LARGE SCALE MRNA] (ISOFORM 1)</scope>
    <source>
        <tissue>Kidney</tissue>
    </source>
</reference>
<reference key="10">
    <citation type="journal article" date="2003" name="J. Gen. Virol.">
        <title>Transcription factor USF, expressed during the entire phase of Varicella-zoster virus infection, interacts physically with the major viral transactivator IE62 and plays a significant role in virus replication.</title>
        <authorList>
            <person name="Rahaus M."/>
            <person name="Desloges N."/>
            <person name="Yang M."/>
            <person name="Ruyechan W.T."/>
            <person name="Wolff M.H."/>
        </authorList>
    </citation>
    <scope>INTERACTION WITH VARICELLA-ZOSTER VIRUS IE62 PROTEIN</scope>
</reference>
<reference key="11">
    <citation type="journal article" date="2014" name="Nat. Struct. Mol. Biol.">
        <title>Uncovering global SUMOylation signaling networks in a site-specific manner.</title>
        <authorList>
            <person name="Hendriks I.A."/>
            <person name="D'Souza R.C."/>
            <person name="Yang B."/>
            <person name="Verlaan-de Vries M."/>
            <person name="Mann M."/>
            <person name="Vertegaal A.C."/>
        </authorList>
    </citation>
    <scope>SUMOYLATION [LARGE SCALE ANALYSIS] AT LYS-306</scope>
    <scope>IDENTIFICATION BY MASS SPECTROMETRY [LARGE SCALE ANALYSIS]</scope>
</reference>
<reference key="12">
    <citation type="journal article" date="2017" name="Nat. Struct. Mol. Biol.">
        <title>Site-specific mapping of the human SUMO proteome reveals co-modification with phosphorylation.</title>
        <authorList>
            <person name="Hendriks I.A."/>
            <person name="Lyon D."/>
            <person name="Young C."/>
            <person name="Jensen L.J."/>
            <person name="Vertegaal A.C."/>
            <person name="Nielsen M.L."/>
        </authorList>
    </citation>
    <scope>SUMOYLATION [LARGE SCALE ANALYSIS] AT LYS-306</scope>
    <scope>IDENTIFICATION BY MASS SPECTROMETRY [LARGE SCALE ANALYSIS]</scope>
</reference>
<reference key="13">
    <citation type="journal article" date="1994" name="EMBO J.">
        <title>Structure and function of the b/HLH/Z domain of USF.</title>
        <authorList>
            <person name="Ferre-D'Amare A.R."/>
            <person name="Pognonec P."/>
            <person name="Roeder R.G."/>
            <person name="Burley S.K."/>
        </authorList>
    </citation>
    <scope>X-RAY CRYSTALLOGRAPHY (2.9 ANGSTROMS) OF 197-260</scope>
</reference>
<reference key="14">
    <citation type="journal article" date="2004" name="Nat. Genet.">
        <title>Familial combined hyperlipidemia is associated with upstream transcription factor 1 (USF1).</title>
        <authorList>
            <person name="Pajukanta P."/>
            <person name="Lilja H.E."/>
            <person name="Sinsheimer J.S."/>
            <person name="Cantor R.M."/>
            <person name="Lusis A.J."/>
            <person name="Gentile M."/>
            <person name="Duan X.J."/>
            <person name="Soro-Paavonen A."/>
            <person name="Naukkarinen J."/>
            <person name="Saarela J."/>
            <person name="Laakso M."/>
            <person name="Ehnholm C."/>
            <person name="Taskinen M.-R."/>
            <person name="Peltonen L."/>
        </authorList>
    </citation>
    <scope>INVOLVEMENT IN FCHL1</scope>
</reference>